<protein>
    <recommendedName>
        <fullName evidence="1">Pole-localizer protein TmaR</fullName>
    </recommendedName>
</protein>
<evidence type="ECO:0000255" key="1">
    <source>
        <dbReference type="HAMAP-Rule" id="MF_00683"/>
    </source>
</evidence>
<name>TMAR_SALTY</name>
<dbReference type="EMBL" id="AE006468">
    <property type="protein sequence ID" value="AAL20963.1"/>
    <property type="molecule type" value="Genomic_DNA"/>
</dbReference>
<dbReference type="RefSeq" id="NP_461004.1">
    <property type="nucleotide sequence ID" value="NC_003197.2"/>
</dbReference>
<dbReference type="RefSeq" id="WP_000450405.1">
    <property type="nucleotide sequence ID" value="NC_003197.2"/>
</dbReference>
<dbReference type="SMR" id="P67605"/>
<dbReference type="STRING" id="99287.STM2059"/>
<dbReference type="PaxDb" id="99287-STM2059"/>
<dbReference type="GeneID" id="1253580"/>
<dbReference type="KEGG" id="stm:STM2059"/>
<dbReference type="PATRIC" id="fig|99287.12.peg.2181"/>
<dbReference type="HOGENOM" id="CLU_153146_0_0_6"/>
<dbReference type="OMA" id="ENMRDDY"/>
<dbReference type="PhylomeDB" id="P67605"/>
<dbReference type="BioCyc" id="SENT99287:STM2059-MONOMER"/>
<dbReference type="Proteomes" id="UP000001014">
    <property type="component" value="Chromosome"/>
</dbReference>
<dbReference type="GO" id="GO:0005829">
    <property type="term" value="C:cytosol"/>
    <property type="evidence" value="ECO:0000318"/>
    <property type="project" value="GO_Central"/>
</dbReference>
<dbReference type="HAMAP" id="MF_00683">
    <property type="entry name" value="Pole_loc_TmaR"/>
    <property type="match status" value="1"/>
</dbReference>
<dbReference type="InterPro" id="IPR007458">
    <property type="entry name" value="DUF496"/>
</dbReference>
<dbReference type="InterPro" id="IPR053375">
    <property type="entry name" value="UPF0265"/>
</dbReference>
<dbReference type="NCBIfam" id="NF003844">
    <property type="entry name" value="PRK05423.1"/>
    <property type="match status" value="1"/>
</dbReference>
<dbReference type="NCBIfam" id="NF040881">
    <property type="entry name" value="PTS_reg_TmaR"/>
    <property type="match status" value="1"/>
</dbReference>
<dbReference type="PANTHER" id="PTHR39591">
    <property type="entry name" value="UPF0265 PROTEIN YEEX"/>
    <property type="match status" value="1"/>
</dbReference>
<dbReference type="PANTHER" id="PTHR39591:SF1">
    <property type="entry name" value="UPF0265 PROTEIN YEEX"/>
    <property type="match status" value="1"/>
</dbReference>
<dbReference type="Pfam" id="PF04363">
    <property type="entry name" value="DUF496"/>
    <property type="match status" value="1"/>
</dbReference>
<dbReference type="PIRSF" id="PIRSF028773">
    <property type="entry name" value="UCP028773"/>
    <property type="match status" value="1"/>
</dbReference>
<gene>
    <name evidence="1" type="primary">tmaR</name>
    <name type="ordered locus">STM2059</name>
</gene>
<organism>
    <name type="scientific">Salmonella typhimurium (strain LT2 / SGSC1412 / ATCC 700720)</name>
    <dbReference type="NCBI Taxonomy" id="99287"/>
    <lineage>
        <taxon>Bacteria</taxon>
        <taxon>Pseudomonadati</taxon>
        <taxon>Pseudomonadota</taxon>
        <taxon>Gammaproteobacteria</taxon>
        <taxon>Enterobacterales</taxon>
        <taxon>Enterobacteriaceae</taxon>
        <taxon>Salmonella</taxon>
    </lineage>
</organism>
<accession>P67605</accession>
<accession>Q8XFP3</accession>
<comment type="function">
    <text evidence="1">Pole-localizer protein involved in the regulation of several cellular processes.</text>
</comment>
<comment type="subcellular location">
    <subcellularLocation>
        <location evidence="1">Cytoplasm</location>
    </subcellularLocation>
    <text evidence="1">Forms clusters that localize mainly near one pole of the cell.</text>
</comment>
<comment type="similarity">
    <text evidence="1">Belongs to the pole-localizer TmaR family.</text>
</comment>
<sequence length="111" mass="13073">METTKPSFQDVLEFVRLFRRKNKLQREIQDIEKKIRDNQKRVLLLDNLSDYIKPGMSVEAIQGIIASMKSDYEDRVDDYIIKNAEISKERRDISKKLKAMGEMKHADVKAE</sequence>
<proteinExistence type="inferred from homology"/>
<keyword id="KW-0175">Coiled coil</keyword>
<keyword id="KW-0963">Cytoplasm</keyword>
<keyword id="KW-1185">Reference proteome</keyword>
<reference key="1">
    <citation type="journal article" date="2001" name="Nature">
        <title>Complete genome sequence of Salmonella enterica serovar Typhimurium LT2.</title>
        <authorList>
            <person name="McClelland M."/>
            <person name="Sanderson K.E."/>
            <person name="Spieth J."/>
            <person name="Clifton S.W."/>
            <person name="Latreille P."/>
            <person name="Courtney L."/>
            <person name="Porwollik S."/>
            <person name="Ali J."/>
            <person name="Dante M."/>
            <person name="Du F."/>
            <person name="Hou S."/>
            <person name="Layman D."/>
            <person name="Leonard S."/>
            <person name="Nguyen C."/>
            <person name="Scott K."/>
            <person name="Holmes A."/>
            <person name="Grewal N."/>
            <person name="Mulvaney E."/>
            <person name="Ryan E."/>
            <person name="Sun H."/>
            <person name="Florea L."/>
            <person name="Miller W."/>
            <person name="Stoneking T."/>
            <person name="Nhan M."/>
            <person name="Waterston R."/>
            <person name="Wilson R.K."/>
        </authorList>
    </citation>
    <scope>NUCLEOTIDE SEQUENCE [LARGE SCALE GENOMIC DNA]</scope>
    <source>
        <strain>LT2 / SGSC1412 / ATCC 700720</strain>
    </source>
</reference>
<feature type="chain" id="PRO_0000072768" description="Pole-localizer protein TmaR">
    <location>
        <begin position="1"/>
        <end position="111"/>
    </location>
</feature>
<feature type="coiled-coil region" evidence="1">
    <location>
        <begin position="14"/>
        <end position="41"/>
    </location>
</feature>